<organism>
    <name type="scientific">Gibberella zeae (strain ATCC MYA-4620 / CBS 123657 / FGSC 9075 / NRRL 31084 / PH-1)</name>
    <name type="common">Wheat head blight fungus</name>
    <name type="synonym">Fusarium graminearum</name>
    <dbReference type="NCBI Taxonomy" id="229533"/>
    <lineage>
        <taxon>Eukaryota</taxon>
        <taxon>Fungi</taxon>
        <taxon>Dikarya</taxon>
        <taxon>Ascomycota</taxon>
        <taxon>Pezizomycotina</taxon>
        <taxon>Sordariomycetes</taxon>
        <taxon>Hypocreomycetidae</taxon>
        <taxon>Hypocreales</taxon>
        <taxon>Nectriaceae</taxon>
        <taxon>Fusarium</taxon>
    </lineage>
</organism>
<dbReference type="EC" id="2.1.1.317" evidence="4"/>
<dbReference type="EMBL" id="DS231664">
    <property type="protein sequence ID" value="ESU09214.1"/>
    <property type="molecule type" value="Genomic_DNA"/>
</dbReference>
<dbReference type="EMBL" id="HG970333">
    <property type="protein sequence ID" value="CEF78857.1"/>
    <property type="molecule type" value="Genomic_DNA"/>
</dbReference>
<dbReference type="RefSeq" id="XP_011321713.1">
    <property type="nucleotide sequence ID" value="XM_011323411.1"/>
</dbReference>
<dbReference type="SMR" id="I1RJD6"/>
<dbReference type="STRING" id="229533.I1RJD6"/>
<dbReference type="GeneID" id="23551227"/>
<dbReference type="KEGG" id="fgr:FGSG_03951"/>
<dbReference type="VEuPathDB" id="FungiDB:FGRAMPH1_01G14109"/>
<dbReference type="eggNOG" id="ENOG502QS47">
    <property type="taxonomic scope" value="Eukaryota"/>
</dbReference>
<dbReference type="HOGENOM" id="CLU_026434_5_0_1"/>
<dbReference type="InParanoid" id="I1RJD6"/>
<dbReference type="OrthoDB" id="13065at110618"/>
<dbReference type="UniPathway" id="UPA00222"/>
<dbReference type="PHI-base" id="PHI:2408"/>
<dbReference type="Proteomes" id="UP000070720">
    <property type="component" value="Chromosome 2"/>
</dbReference>
<dbReference type="GO" id="GO:0016020">
    <property type="term" value="C:membrane"/>
    <property type="evidence" value="ECO:0007669"/>
    <property type="project" value="UniProtKB-SubCell"/>
</dbReference>
<dbReference type="GO" id="GO:0008168">
    <property type="term" value="F:methyltransferase activity"/>
    <property type="evidence" value="ECO:0007669"/>
    <property type="project" value="UniProtKB-KW"/>
</dbReference>
<dbReference type="GO" id="GO:0032259">
    <property type="term" value="P:methylation"/>
    <property type="evidence" value="ECO:0007669"/>
    <property type="project" value="UniProtKB-KW"/>
</dbReference>
<dbReference type="GO" id="GO:0006665">
    <property type="term" value="P:sphingolipid metabolic process"/>
    <property type="evidence" value="ECO:0007669"/>
    <property type="project" value="UniProtKB-UniPathway"/>
</dbReference>
<dbReference type="CDD" id="cd02440">
    <property type="entry name" value="AdoMet_MTases"/>
    <property type="match status" value="1"/>
</dbReference>
<dbReference type="Gene3D" id="3.40.50.150">
    <property type="entry name" value="Vaccinia Virus protein VP39"/>
    <property type="match status" value="1"/>
</dbReference>
<dbReference type="InterPro" id="IPR029063">
    <property type="entry name" value="SAM-dependent_MTases_sf"/>
</dbReference>
<dbReference type="InterPro" id="IPR052290">
    <property type="entry name" value="Sphingo_C9-MT"/>
</dbReference>
<dbReference type="PANTHER" id="PTHR45197:SF1">
    <property type="entry name" value="SPHINGOLIPID C9-METHYLTRANSFERASE A-RELATED"/>
    <property type="match status" value="1"/>
</dbReference>
<dbReference type="PANTHER" id="PTHR45197">
    <property type="entry name" value="SYNTHASE, PUTATIVE (AFU_ORTHOLOGUE AFUA_7G04190)-RELATED"/>
    <property type="match status" value="1"/>
</dbReference>
<dbReference type="Pfam" id="PF02353">
    <property type="entry name" value="CMAS"/>
    <property type="match status" value="1"/>
</dbReference>
<dbReference type="SUPFAM" id="SSF53335">
    <property type="entry name" value="S-adenosyl-L-methionine-dependent methyltransferases"/>
    <property type="match status" value="1"/>
</dbReference>
<evidence type="ECO:0000250" key="1">
    <source>
        <dbReference type="UniProtKB" id="C4R7Z3"/>
    </source>
</evidence>
<evidence type="ECO:0000250" key="2">
    <source>
        <dbReference type="UniProtKB" id="P9WPB7"/>
    </source>
</evidence>
<evidence type="ECO:0000255" key="3"/>
<evidence type="ECO:0000269" key="4">
    <source>
    </source>
</evidence>
<evidence type="ECO:0000303" key="5">
    <source>
    </source>
</evidence>
<evidence type="ECO:0000305" key="6"/>
<evidence type="ECO:0000305" key="7">
    <source>
    </source>
</evidence>
<feature type="chain" id="PRO_0000434800" description="Sphingolipid C9-methyltransferase 1">
    <location>
        <begin position="1"/>
        <end position="513"/>
    </location>
</feature>
<feature type="transmembrane region" description="Helical" evidence="3">
    <location>
        <begin position="63"/>
        <end position="83"/>
    </location>
</feature>
<feature type="transmembrane region" description="Helical" evidence="3">
    <location>
        <begin position="85"/>
        <end position="105"/>
    </location>
</feature>
<feature type="binding site" evidence="2">
    <location>
        <begin position="228"/>
        <end position="229"/>
    </location>
    <ligand>
        <name>S-adenosyl-L-methionine</name>
        <dbReference type="ChEBI" id="CHEBI:59789"/>
    </ligand>
</feature>
<feature type="binding site" evidence="2">
    <location>
        <begin position="265"/>
        <end position="273"/>
    </location>
    <ligand>
        <name>S-adenosyl-L-methionine</name>
        <dbReference type="ChEBI" id="CHEBI:59789"/>
    </ligand>
</feature>
<feature type="binding site" evidence="2">
    <location>
        <begin position="291"/>
        <end position="296"/>
    </location>
    <ligand>
        <name>S-adenosyl-L-methionine</name>
        <dbReference type="ChEBI" id="CHEBI:59789"/>
    </ligand>
</feature>
<feature type="binding site" evidence="2">
    <location>
        <begin position="321"/>
        <end position="322"/>
    </location>
    <ligand>
        <name>S-adenosyl-L-methionine</name>
        <dbReference type="ChEBI" id="CHEBI:59789"/>
    </ligand>
</feature>
<gene>
    <name evidence="5" type="primary">MT1</name>
    <name type="ORF">FGRRES_03951</name>
    <name type="ORF">FGSG_03951</name>
</gene>
<sequence length="513" mass="58009">MAIKQNGRAHLSSDIDFIRTPEAPVDSLSTGKNPGVPSTNSPAIKNAPLPADGPGYEQWSNGFLVAALLGIPQWLSWKLGGGLKTAIFLSIFTTIPVLAVIWTVMSRYSPRINHDVKLPGRPVEFYLTFKSDSHRARWTGTHKIPMATFFELYFTGQVDLNGDALEVFEYRHDWATFNFTSETFRYILFTFFPDVVLHLRSQDEEQVRTNYDSGNDHYAWFLGPRMIYTSGIISDPTREETLEEMQDNKLAIVCEKISLKEGDTLLDIGCGWGTLAKFASLNYGAKVTGVTLARNQVQWGNDGLQQAGIPEEQSRLLCCDYRDIPEDQKFNKITQLEMAEHVGVRRLTGFFRQCYDMLENDGSMYVQVSGFRKAWQYEDFIWGLFLNKYIFPGADASTPLSYYVGCLESAGFEVKSVDTIGVHYSGTLWRWYRNWLGNADKVKAKYGVRWFRIWEIFLAYSTIGSRQGSATCYQIVVVKNLNSNHRIDGVYSQYGLHGALAAAKAAGKNMLPK</sequence>
<proteinExistence type="inferred from homology"/>
<accession>I1RJD6</accession>
<accession>A0A098DK74</accession>
<accession>A0A0E0S5T2</accession>
<comment type="function">
    <text evidence="4">Catalyzes methylation of the sphingoid base component of glucosylceramides (GluCers) at the C9-position. Sphingolipid C9-methylation requires 4,8-desaturated ceramides as substrates. Glucosylceramides play important roles in the growth, differentiation and pathogenicity. The methyl group at the C9-position distinguishes fungal glucosylceramides from those of plants and animals, and may thus play a role in host-pathogen interactions enabling the host to recognize the fungal attack and initiate specific defense responses. However, C-9 methylation of GlcCers is not essential for the sensitivity of F.graminearum to plant defensins MsDef1 and RsAFP2.</text>
</comment>
<comment type="catalytic activity">
    <reaction evidence="4">
        <text>a (4E,8E)-4-sphinga-4,8-dienine ceramide + S-adenosyl-L-methionine = a 9-methyl-(4E,8E)-sphinga-4,8-dienine ceramide + S-adenosyl-L-homocysteine + H(+)</text>
        <dbReference type="Rhea" id="RHEA:46804"/>
        <dbReference type="ChEBI" id="CHEBI:15378"/>
        <dbReference type="ChEBI" id="CHEBI:57856"/>
        <dbReference type="ChEBI" id="CHEBI:59789"/>
        <dbReference type="ChEBI" id="CHEBI:85953"/>
        <dbReference type="ChEBI" id="CHEBI:87033"/>
        <dbReference type="EC" id="2.1.1.317"/>
    </reaction>
</comment>
<comment type="pathway">
    <text evidence="7">Lipid metabolism; sphingolipid metabolism.</text>
</comment>
<comment type="subcellular location">
    <subcellularLocation>
        <location evidence="1">Membrane</location>
        <topology evidence="3">Multi-pass membrane protein</topology>
    </subcellularLocation>
</comment>
<comment type="disruption phenotype">
    <text evidence="4">In contrast to the knockout of its paralog MT2, has no effect on methylation of GluCers and exhibits no growth defects. However, a double-knockout with its paralog MT2 is not viable.</text>
</comment>
<comment type="similarity">
    <text evidence="6">Belongs to the CFA/CMAS family.</text>
</comment>
<name>C9MT1_GIBZE</name>
<keyword id="KW-0444">Lipid biosynthesis</keyword>
<keyword id="KW-0443">Lipid metabolism</keyword>
<keyword id="KW-0472">Membrane</keyword>
<keyword id="KW-0489">Methyltransferase</keyword>
<keyword id="KW-1185">Reference proteome</keyword>
<keyword id="KW-0949">S-adenosyl-L-methionine</keyword>
<keyword id="KW-0746">Sphingolipid metabolism</keyword>
<keyword id="KW-0808">Transferase</keyword>
<keyword id="KW-0812">Transmembrane</keyword>
<keyword id="KW-1133">Transmembrane helix</keyword>
<reference key="1">
    <citation type="journal article" date="2007" name="Science">
        <title>The Fusarium graminearum genome reveals a link between localized polymorphism and pathogen specialization.</title>
        <authorList>
            <person name="Cuomo C.A."/>
            <person name="Gueldener U."/>
            <person name="Xu J.-R."/>
            <person name="Trail F."/>
            <person name="Turgeon B.G."/>
            <person name="Di Pietro A."/>
            <person name="Walton J.D."/>
            <person name="Ma L.-J."/>
            <person name="Baker S.E."/>
            <person name="Rep M."/>
            <person name="Adam G."/>
            <person name="Antoniw J."/>
            <person name="Baldwin T."/>
            <person name="Calvo S.E."/>
            <person name="Chang Y.-L."/>
            <person name="DeCaprio D."/>
            <person name="Gale L.R."/>
            <person name="Gnerre S."/>
            <person name="Goswami R.S."/>
            <person name="Hammond-Kosack K."/>
            <person name="Harris L.J."/>
            <person name="Hilburn K."/>
            <person name="Kennell J.C."/>
            <person name="Kroken S."/>
            <person name="Magnuson J.K."/>
            <person name="Mannhaupt G."/>
            <person name="Mauceli E.W."/>
            <person name="Mewes H.-W."/>
            <person name="Mitterbauer R."/>
            <person name="Muehlbauer G."/>
            <person name="Muensterkoetter M."/>
            <person name="Nelson D."/>
            <person name="O'Donnell K."/>
            <person name="Ouellet T."/>
            <person name="Qi W."/>
            <person name="Quesneville H."/>
            <person name="Roncero M.I.G."/>
            <person name="Seong K.-Y."/>
            <person name="Tetko I.V."/>
            <person name="Urban M."/>
            <person name="Waalwijk C."/>
            <person name="Ward T.J."/>
            <person name="Yao J."/>
            <person name="Birren B.W."/>
            <person name="Kistler H.C."/>
        </authorList>
    </citation>
    <scope>NUCLEOTIDE SEQUENCE [LARGE SCALE GENOMIC DNA]</scope>
    <source>
        <strain>ATCC MYA-4620 / CBS 123657 / FGSC 9075 / NRRL 31084 / PH-1</strain>
    </source>
</reference>
<reference key="2">
    <citation type="journal article" date="2010" name="Nature">
        <title>Comparative genomics reveals mobile pathogenicity chromosomes in Fusarium.</title>
        <authorList>
            <person name="Ma L.-J."/>
            <person name="van der Does H.C."/>
            <person name="Borkovich K.A."/>
            <person name="Coleman J.J."/>
            <person name="Daboussi M.-J."/>
            <person name="Di Pietro A."/>
            <person name="Dufresne M."/>
            <person name="Freitag M."/>
            <person name="Grabherr M."/>
            <person name="Henrissat B."/>
            <person name="Houterman P.M."/>
            <person name="Kang S."/>
            <person name="Shim W.-B."/>
            <person name="Woloshuk C."/>
            <person name="Xie X."/>
            <person name="Xu J.-R."/>
            <person name="Antoniw J."/>
            <person name="Baker S.E."/>
            <person name="Bluhm B.H."/>
            <person name="Breakspear A."/>
            <person name="Brown D.W."/>
            <person name="Butchko R.A.E."/>
            <person name="Chapman S."/>
            <person name="Coulson R."/>
            <person name="Coutinho P.M."/>
            <person name="Danchin E.G.J."/>
            <person name="Diener A."/>
            <person name="Gale L.R."/>
            <person name="Gardiner D.M."/>
            <person name="Goff S."/>
            <person name="Hammond-Kosack K.E."/>
            <person name="Hilburn K."/>
            <person name="Hua-Van A."/>
            <person name="Jonkers W."/>
            <person name="Kazan K."/>
            <person name="Kodira C.D."/>
            <person name="Koehrsen M."/>
            <person name="Kumar L."/>
            <person name="Lee Y.-H."/>
            <person name="Li L."/>
            <person name="Manners J.M."/>
            <person name="Miranda-Saavedra D."/>
            <person name="Mukherjee M."/>
            <person name="Park G."/>
            <person name="Park J."/>
            <person name="Park S.-Y."/>
            <person name="Proctor R.H."/>
            <person name="Regev A."/>
            <person name="Ruiz-Roldan M.C."/>
            <person name="Sain D."/>
            <person name="Sakthikumar S."/>
            <person name="Sykes S."/>
            <person name="Schwartz D.C."/>
            <person name="Turgeon B.G."/>
            <person name="Wapinski I."/>
            <person name="Yoder O."/>
            <person name="Young S."/>
            <person name="Zeng Q."/>
            <person name="Zhou S."/>
            <person name="Galagan J."/>
            <person name="Cuomo C.A."/>
            <person name="Kistler H.C."/>
            <person name="Rep M."/>
        </authorList>
    </citation>
    <scope>GENOME REANNOTATION</scope>
    <source>
        <strain>ATCC MYA-4620 / CBS 123657 / FGSC 9075 / NRRL 31084 / PH-1</strain>
    </source>
</reference>
<reference key="3">
    <citation type="journal article" date="2015" name="BMC Genomics">
        <title>The completed genome sequence of the pathogenic ascomycete fungus Fusarium graminearum.</title>
        <authorList>
            <person name="King R."/>
            <person name="Urban M."/>
            <person name="Hammond-Kosack M.C.U."/>
            <person name="Hassani-Pak K."/>
            <person name="Hammond-Kosack K.E."/>
        </authorList>
    </citation>
    <scope>NUCLEOTIDE SEQUENCE [LARGE SCALE GENOMIC DNA]</scope>
    <source>
        <strain>ATCC MYA-4620 / CBS 123657 / FGSC 9075 / NRRL 31084 / PH-1</strain>
    </source>
</reference>
<reference key="4">
    <citation type="journal article" date="2009" name="Eukaryot. Cell">
        <title>Sphingolipid C-9 methyltransferases are important for growth and virulence but not for sensitivity to antifungal plant defensins in Fusarium graminearum.</title>
        <authorList>
            <person name="Ramamoorthy V."/>
            <person name="Cahoon E.B."/>
            <person name="Thokala M."/>
            <person name="Kaur J."/>
            <person name="Li J."/>
            <person name="Shah D.M."/>
        </authorList>
    </citation>
    <scope>FUNCTION</scope>
    <scope>DISRUPTION PHENOTYPE</scope>
    <source>
        <strain>ATCC MYA-4620 / CBS 123657 / FGSC 9075 / NRRL 31084 / PH-1</strain>
    </source>
</reference>
<protein>
    <recommendedName>
        <fullName evidence="5">Sphingolipid C9-methyltransferase 1</fullName>
        <shortName evidence="5">C-9-MT1</shortName>
        <ecNumber evidence="4">2.1.1.317</ecNumber>
    </recommendedName>
</protein>